<gene>
    <name type="ordered locus">PSPPH_1551</name>
</gene>
<protein>
    <recommendedName>
        <fullName evidence="1">UPF0260 protein PSPPH_1551</fullName>
    </recommendedName>
</protein>
<sequence>MAAKVEPFWIRKTLDQLSTEEWESLCDGCGLCCLQKLEDEEDNSVYYTRIACKLLDLTTCQCSDYANRRASVPDCIQLTPGQADEFKWLPPTCGYRLVSEGKDLPLWHHLVCGDRTAVHHERISQSGRMLSENSVAEDDWEDYLIFRAG</sequence>
<reference key="1">
    <citation type="journal article" date="2005" name="J. Bacteriol.">
        <title>Whole-genome sequence analysis of Pseudomonas syringae pv. phaseolicola 1448A reveals divergence among pathovars in genes involved in virulence and transposition.</title>
        <authorList>
            <person name="Joardar V."/>
            <person name="Lindeberg M."/>
            <person name="Jackson R.W."/>
            <person name="Selengut J."/>
            <person name="Dodson R."/>
            <person name="Brinkac L.M."/>
            <person name="Daugherty S.C."/>
            <person name="DeBoy R.T."/>
            <person name="Durkin A.S."/>
            <person name="Gwinn Giglio M."/>
            <person name="Madupu R."/>
            <person name="Nelson W.C."/>
            <person name="Rosovitz M.J."/>
            <person name="Sullivan S.A."/>
            <person name="Crabtree J."/>
            <person name="Creasy T."/>
            <person name="Davidsen T.M."/>
            <person name="Haft D.H."/>
            <person name="Zafar N."/>
            <person name="Zhou L."/>
            <person name="Halpin R."/>
            <person name="Holley T."/>
            <person name="Khouri H.M."/>
            <person name="Feldblyum T.V."/>
            <person name="White O."/>
            <person name="Fraser C.M."/>
            <person name="Chatterjee A.K."/>
            <person name="Cartinhour S."/>
            <person name="Schneider D."/>
            <person name="Mansfield J.W."/>
            <person name="Collmer A."/>
            <person name="Buell R."/>
        </authorList>
    </citation>
    <scope>NUCLEOTIDE SEQUENCE [LARGE SCALE GENOMIC DNA]</scope>
    <source>
        <strain>1448A / Race 6</strain>
    </source>
</reference>
<comment type="similarity">
    <text evidence="1">Belongs to the UPF0260 family.</text>
</comment>
<organism>
    <name type="scientific">Pseudomonas savastanoi pv. phaseolicola (strain 1448A / Race 6)</name>
    <name type="common">Pseudomonas syringae pv. phaseolicola (strain 1448A / Race 6)</name>
    <dbReference type="NCBI Taxonomy" id="264730"/>
    <lineage>
        <taxon>Bacteria</taxon>
        <taxon>Pseudomonadati</taxon>
        <taxon>Pseudomonadota</taxon>
        <taxon>Gammaproteobacteria</taxon>
        <taxon>Pseudomonadales</taxon>
        <taxon>Pseudomonadaceae</taxon>
        <taxon>Pseudomonas</taxon>
    </lineage>
</organism>
<name>Y1551_PSE14</name>
<accession>Q48LC2</accession>
<evidence type="ECO:0000255" key="1">
    <source>
        <dbReference type="HAMAP-Rule" id="MF_00676"/>
    </source>
</evidence>
<proteinExistence type="inferred from homology"/>
<feature type="chain" id="PRO_1000044799" description="UPF0260 protein PSPPH_1551">
    <location>
        <begin position="1"/>
        <end position="149"/>
    </location>
</feature>
<dbReference type="EMBL" id="CP000058">
    <property type="protein sequence ID" value="AAZ33164.1"/>
    <property type="molecule type" value="Genomic_DNA"/>
</dbReference>
<dbReference type="RefSeq" id="WP_011168103.1">
    <property type="nucleotide sequence ID" value="NC_005773.3"/>
</dbReference>
<dbReference type="KEGG" id="psp:PSPPH_1551"/>
<dbReference type="eggNOG" id="COG2983">
    <property type="taxonomic scope" value="Bacteria"/>
</dbReference>
<dbReference type="HOGENOM" id="CLU_109769_0_1_6"/>
<dbReference type="Proteomes" id="UP000000551">
    <property type="component" value="Chromosome"/>
</dbReference>
<dbReference type="HAMAP" id="MF_00676">
    <property type="entry name" value="UPF0260"/>
    <property type="match status" value="1"/>
</dbReference>
<dbReference type="InterPro" id="IPR005358">
    <property type="entry name" value="Puta_zinc/iron-chelating_dom"/>
</dbReference>
<dbReference type="InterPro" id="IPR008228">
    <property type="entry name" value="UCP006173"/>
</dbReference>
<dbReference type="NCBIfam" id="NF003501">
    <property type="entry name" value="PRK05170.1-5"/>
    <property type="match status" value="1"/>
</dbReference>
<dbReference type="NCBIfam" id="NF003502">
    <property type="entry name" value="PRK05170.1-6"/>
    <property type="match status" value="1"/>
</dbReference>
<dbReference type="NCBIfam" id="NF003507">
    <property type="entry name" value="PRK05170.2-5"/>
    <property type="match status" value="1"/>
</dbReference>
<dbReference type="PANTHER" id="PTHR37421">
    <property type="entry name" value="UPF0260 PROTEIN YCGN"/>
    <property type="match status" value="1"/>
</dbReference>
<dbReference type="PANTHER" id="PTHR37421:SF1">
    <property type="entry name" value="UPF0260 PROTEIN YCGN"/>
    <property type="match status" value="1"/>
</dbReference>
<dbReference type="Pfam" id="PF03692">
    <property type="entry name" value="CxxCxxCC"/>
    <property type="match status" value="1"/>
</dbReference>
<dbReference type="PIRSF" id="PIRSF006173">
    <property type="entry name" value="UCP006173"/>
    <property type="match status" value="1"/>
</dbReference>